<feature type="signal peptide" evidence="6">
    <location>
        <begin position="1"/>
        <end position="18"/>
    </location>
</feature>
<feature type="chain" id="PRO_0000001706" description="L-amino-acid oxidase">
    <location>
        <begin position="19"/>
        <end position="516"/>
    </location>
</feature>
<feature type="binding site" evidence="3">
    <location>
        <begin position="61"/>
        <end position="62"/>
    </location>
    <ligand>
        <name>FAD</name>
        <dbReference type="ChEBI" id="CHEBI:57692"/>
    </ligand>
</feature>
<feature type="binding site" evidence="3">
    <location>
        <begin position="81"/>
        <end position="82"/>
    </location>
    <ligand>
        <name>FAD</name>
        <dbReference type="ChEBI" id="CHEBI:57692"/>
    </ligand>
</feature>
<feature type="binding site" evidence="3">
    <location>
        <position position="89"/>
    </location>
    <ligand>
        <name>FAD</name>
        <dbReference type="ChEBI" id="CHEBI:57692"/>
    </ligand>
</feature>
<feature type="binding site" evidence="3">
    <location>
        <begin position="103"/>
        <end position="106"/>
    </location>
    <ligand>
        <name>FAD</name>
        <dbReference type="ChEBI" id="CHEBI:57692"/>
    </ligand>
</feature>
<feature type="binding site" evidence="3">
    <location>
        <position position="106"/>
    </location>
    <ligand>
        <name>substrate</name>
    </ligand>
</feature>
<feature type="binding site" evidence="3">
    <location>
        <position position="239"/>
    </location>
    <ligand>
        <name>substrate</name>
    </ligand>
</feature>
<feature type="binding site" evidence="1">
    <location>
        <position position="279"/>
    </location>
    <ligand>
        <name>FAD</name>
        <dbReference type="ChEBI" id="CHEBI:57692"/>
    </ligand>
</feature>
<feature type="binding site" evidence="3">
    <location>
        <position position="390"/>
    </location>
    <ligand>
        <name>substrate</name>
    </ligand>
</feature>
<feature type="binding site" evidence="3">
    <location>
        <position position="475"/>
    </location>
    <ligand>
        <name>FAD</name>
        <dbReference type="ChEBI" id="CHEBI:57692"/>
    </ligand>
</feature>
<feature type="binding site" evidence="3">
    <location>
        <begin position="482"/>
        <end position="487"/>
    </location>
    <ligand>
        <name>FAD</name>
        <dbReference type="ChEBI" id="CHEBI:57692"/>
    </ligand>
</feature>
<feature type="binding site" evidence="3">
    <location>
        <begin position="482"/>
        <end position="483"/>
    </location>
    <ligand>
        <name>substrate</name>
    </ligand>
</feature>
<feature type="glycosylation site" description="N-linked (GlcNAc...) asparagine" evidence="4">
    <location>
        <position position="379"/>
    </location>
</feature>
<feature type="disulfide bond" evidence="3">
    <location>
        <begin position="28"/>
        <end position="189"/>
    </location>
</feature>
<feature type="disulfide bond" evidence="3">
    <location>
        <begin position="349"/>
        <end position="430"/>
    </location>
</feature>
<sequence>MNVFFMFSLLFLAALGSCAHDRNPLEECFRETDYEEFLEIAKNGLTATSNPKRVVIVGAGMAGLSAAYVLAGAGHQVTVLEASERVGGRVRTYRKKDWYANLGPMRLPTKHRIVREYIKKFDLKLNEFSQENENAWYFIKNIRKRVREVKNNPGLLEYPVKPSEEGKSAAQLYVESLRKVVEELRSTNCKYILDKYDTYSTKEYLLKEGNLSPGAVDMIGDLLNEDSGYYVSFIESLKHDDIFGYEKRFDEIVGGMDQLPTSMYEAIKEKVQVHFNARVIEIQQNDREATVTYQTSANEMSSVTADYVIVCTTSRAARRIKFEPPLPPKKAHALRSVHYRSGTKIFLTCTKKFWEDDGIHGGKSTTDLPSRFIYYPNHNFTSGVGVIIAYGIGDDANFFQALDFKDCADIVINDLSLIHELPKEDIQTFCHPSMIQRWSLDKYAMGGITTFTPYQFQHFSEALTAPFKRIYFAGEYTAQFHGWIDSTIKSGLTAARDVNRASENPSGIHLSNDNEF</sequence>
<organism>
    <name type="scientific">Crotalus adamanteus</name>
    <name type="common">Eastern diamondback rattlesnake</name>
    <dbReference type="NCBI Taxonomy" id="8729"/>
    <lineage>
        <taxon>Eukaryota</taxon>
        <taxon>Metazoa</taxon>
        <taxon>Chordata</taxon>
        <taxon>Craniata</taxon>
        <taxon>Vertebrata</taxon>
        <taxon>Euteleostomi</taxon>
        <taxon>Lepidosauria</taxon>
        <taxon>Squamata</taxon>
        <taxon>Bifurcata</taxon>
        <taxon>Unidentata</taxon>
        <taxon>Episquamata</taxon>
        <taxon>Toxicofera</taxon>
        <taxon>Serpentes</taxon>
        <taxon>Colubroidea</taxon>
        <taxon>Viperidae</taxon>
        <taxon>Crotalinae</taxon>
        <taxon>Crotalus</taxon>
    </lineage>
</organism>
<protein>
    <recommendedName>
        <fullName>L-amino-acid oxidase</fullName>
        <shortName evidence="7">LAAO</shortName>
        <shortName>LAO</shortName>
        <ecNumber evidence="5">1.4.3.2</ecNumber>
    </recommendedName>
</protein>
<reference key="1">
    <citation type="journal article" date="1998" name="Biochem. Biophys. Res. Commun.">
        <title>Primary structure of the snake venom L-amino acid oxidase shows high homology with the mouse B cell interleukin 4-induced Fig1 protein.</title>
        <authorList>
            <person name="Raibekas A.A."/>
            <person name="Massey V."/>
        </authorList>
    </citation>
    <scope>NUCLEOTIDE SEQUENCE [MRNA]</scope>
    <scope>PROTEIN SEQUENCE OF 19-44 AND 106-130</scope>
    <scope>SUBCELLULAR LOCATION</scope>
    <source>
        <tissue>Venom</tissue>
        <tissue>Venom gland</tissue>
    </source>
</reference>
<reference key="2">
    <citation type="journal article" date="1967" name="J. Biol. Chem.">
        <title>On the reaction mechanism of Crotalus adamanteus L-amino acid oxidase.</title>
        <authorList>
            <person name="Massey V."/>
            <person name="Curti B."/>
        </authorList>
    </citation>
    <scope>CATALYTIC ACTIVITY</scope>
    <scope>COFACTOR</scope>
    <scope>SUBSTRATE SPECIFICITY</scope>
    <source>
        <tissue>Venom</tissue>
    </source>
</reference>
<proteinExistence type="evidence at protein level"/>
<accession>O93364</accession>
<name>OXLA_CROAD</name>
<evidence type="ECO:0000250" key="1"/>
<evidence type="ECO:0000250" key="2">
    <source>
        <dbReference type="UniProtKB" id="P0CC17"/>
    </source>
</evidence>
<evidence type="ECO:0000250" key="3">
    <source>
        <dbReference type="UniProtKB" id="P81382"/>
    </source>
</evidence>
<evidence type="ECO:0000255" key="4"/>
<evidence type="ECO:0000269" key="5">
    <source>
    </source>
</evidence>
<evidence type="ECO:0000269" key="6">
    <source>
    </source>
</evidence>
<evidence type="ECO:0000303" key="7">
    <source>
    </source>
</evidence>
<evidence type="ECO:0000305" key="8"/>
<evidence type="ECO:0000305" key="9">
    <source>
    </source>
</evidence>
<keyword id="KW-0044">Antibiotic</keyword>
<keyword id="KW-0929">Antimicrobial</keyword>
<keyword id="KW-0053">Apoptosis</keyword>
<keyword id="KW-0204">Cytolysis</keyword>
<keyword id="KW-0903">Direct protein sequencing</keyword>
<keyword id="KW-1015">Disulfide bond</keyword>
<keyword id="KW-0274">FAD</keyword>
<keyword id="KW-0285">Flavoprotein</keyword>
<keyword id="KW-0325">Glycoprotein</keyword>
<keyword id="KW-0354">Hemolysis</keyword>
<keyword id="KW-1199">Hemostasis impairing toxin</keyword>
<keyword id="KW-0560">Oxidoreductase</keyword>
<keyword id="KW-0964">Secreted</keyword>
<keyword id="KW-0732">Signal</keyword>
<keyword id="KW-0800">Toxin</keyword>
<dbReference type="EC" id="1.4.3.2" evidence="5"/>
<dbReference type="EMBL" id="AF071564">
    <property type="protein sequence ID" value="AAC32267.1"/>
    <property type="molecule type" value="mRNA"/>
</dbReference>
<dbReference type="PIR" id="JE0266">
    <property type="entry name" value="JE0266"/>
</dbReference>
<dbReference type="SMR" id="O93364"/>
<dbReference type="STRENDA-DB" id="GDLTUL">
    <property type="experiment" value="Activity of amino acid oxidase"/>
</dbReference>
<dbReference type="STRENDA-DB" id="TRMLOR">
    <property type="experiment" value="Kinetic of L-AAO from Crotalus adamanteus"/>
</dbReference>
<dbReference type="GO" id="GO:0005576">
    <property type="term" value="C:extracellular region"/>
    <property type="evidence" value="ECO:0007669"/>
    <property type="project" value="UniProtKB-SubCell"/>
</dbReference>
<dbReference type="GO" id="GO:0106329">
    <property type="term" value="F:L-phenylalaine oxidase activity"/>
    <property type="evidence" value="ECO:0007669"/>
    <property type="project" value="RHEA"/>
</dbReference>
<dbReference type="GO" id="GO:0090729">
    <property type="term" value="F:toxin activity"/>
    <property type="evidence" value="ECO:0007669"/>
    <property type="project" value="UniProtKB-KW"/>
</dbReference>
<dbReference type="GO" id="GO:0009063">
    <property type="term" value="P:amino acid catabolic process"/>
    <property type="evidence" value="ECO:0007669"/>
    <property type="project" value="TreeGrafter"/>
</dbReference>
<dbReference type="GO" id="GO:0006915">
    <property type="term" value="P:apoptotic process"/>
    <property type="evidence" value="ECO:0007669"/>
    <property type="project" value="UniProtKB-KW"/>
</dbReference>
<dbReference type="GO" id="GO:0042742">
    <property type="term" value="P:defense response to bacterium"/>
    <property type="evidence" value="ECO:0007669"/>
    <property type="project" value="UniProtKB-KW"/>
</dbReference>
<dbReference type="GO" id="GO:0031640">
    <property type="term" value="P:killing of cells of another organism"/>
    <property type="evidence" value="ECO:0007669"/>
    <property type="project" value="UniProtKB-KW"/>
</dbReference>
<dbReference type="FunFam" id="1.10.405.10:FF:000004">
    <property type="entry name" value="Amine oxidase"/>
    <property type="match status" value="1"/>
</dbReference>
<dbReference type="FunFam" id="3.50.50.60:FF:000450">
    <property type="entry name" value="Amine oxidase"/>
    <property type="match status" value="1"/>
</dbReference>
<dbReference type="Gene3D" id="3.90.660.10">
    <property type="match status" value="1"/>
</dbReference>
<dbReference type="Gene3D" id="3.50.50.60">
    <property type="entry name" value="FAD/NAD(P)-binding domain"/>
    <property type="match status" value="1"/>
</dbReference>
<dbReference type="Gene3D" id="1.10.405.10">
    <property type="entry name" value="Guanine Nucleotide Dissociation Inhibitor, domain 1"/>
    <property type="match status" value="1"/>
</dbReference>
<dbReference type="InterPro" id="IPR002937">
    <property type="entry name" value="Amino_oxidase"/>
</dbReference>
<dbReference type="InterPro" id="IPR036188">
    <property type="entry name" value="FAD/NAD-bd_sf"/>
</dbReference>
<dbReference type="InterPro" id="IPR050281">
    <property type="entry name" value="Flavin_monoamine_oxidase"/>
</dbReference>
<dbReference type="PANTHER" id="PTHR10742:SF355">
    <property type="entry name" value="AMINE OXIDASE"/>
    <property type="match status" value="1"/>
</dbReference>
<dbReference type="PANTHER" id="PTHR10742">
    <property type="entry name" value="FLAVIN MONOAMINE OXIDASE"/>
    <property type="match status" value="1"/>
</dbReference>
<dbReference type="Pfam" id="PF01593">
    <property type="entry name" value="Amino_oxidase"/>
    <property type="match status" value="1"/>
</dbReference>
<dbReference type="SUPFAM" id="SSF54373">
    <property type="entry name" value="FAD-linked reductases, C-terminal domain"/>
    <property type="match status" value="1"/>
</dbReference>
<dbReference type="SUPFAM" id="SSF51905">
    <property type="entry name" value="FAD/NAD(P)-binding domain"/>
    <property type="match status" value="1"/>
</dbReference>
<comment type="function">
    <text evidence="2 5">Catalyzes an oxidative deamination of predominantly hydrophobic and aromatic L-amino acids, thus producing hydrogen peroxide that may contribute to the diverse toxic effects of this enzyme (PubMed:6067195). Is active on L-Arg, L-Phe, L-Met, and L-Leu and is weakly active on L-Val (PubMed:6067195). Exhibits diverse biological activities, such as hemorrhage, hemolysis, edema, apoptosis of vascular endothelial cells or tumor cell lines, antibacterial and antiparasitic activities, as well as regulation of platelet aggregation. Its effect on platelets is controversial, since it either induces aggregation or inhibits agonist-induced aggregation. These different effects are probably due to different experimental conditions (By similarity).</text>
</comment>
<comment type="catalytic activity">
    <reaction evidence="5">
        <text>an L-alpha-amino acid + O2 + H2O = a 2-oxocarboxylate + H2O2 + NH4(+)</text>
        <dbReference type="Rhea" id="RHEA:13781"/>
        <dbReference type="ChEBI" id="CHEBI:15377"/>
        <dbReference type="ChEBI" id="CHEBI:15379"/>
        <dbReference type="ChEBI" id="CHEBI:16240"/>
        <dbReference type="ChEBI" id="CHEBI:28938"/>
        <dbReference type="ChEBI" id="CHEBI:35179"/>
        <dbReference type="ChEBI" id="CHEBI:59869"/>
        <dbReference type="EC" id="1.4.3.2"/>
    </reaction>
</comment>
<comment type="catalytic activity">
    <reaction evidence="5">
        <text>L-leucine + O2 + H2O = 4-methyl-2-oxopentanoate + H2O2 + NH4(+)</text>
        <dbReference type="Rhea" id="RHEA:60996"/>
        <dbReference type="ChEBI" id="CHEBI:15377"/>
        <dbReference type="ChEBI" id="CHEBI:15379"/>
        <dbReference type="ChEBI" id="CHEBI:16240"/>
        <dbReference type="ChEBI" id="CHEBI:17865"/>
        <dbReference type="ChEBI" id="CHEBI:28938"/>
        <dbReference type="ChEBI" id="CHEBI:57427"/>
    </reaction>
</comment>
<comment type="catalytic activity">
    <reaction evidence="5">
        <text>L-phenylalanine + O2 + H2O = 3-phenylpyruvate + H2O2 + NH4(+)</text>
        <dbReference type="Rhea" id="RHEA:61240"/>
        <dbReference type="ChEBI" id="CHEBI:15377"/>
        <dbReference type="ChEBI" id="CHEBI:15379"/>
        <dbReference type="ChEBI" id="CHEBI:16240"/>
        <dbReference type="ChEBI" id="CHEBI:18005"/>
        <dbReference type="ChEBI" id="CHEBI:28938"/>
        <dbReference type="ChEBI" id="CHEBI:58095"/>
    </reaction>
</comment>
<comment type="catalytic activity">
    <reaction evidence="5">
        <text>L-methionine + O2 + H2O = 4-methylsulfanyl-2-oxobutanoate + H2O2 + NH4(+)</text>
        <dbReference type="Rhea" id="RHEA:61236"/>
        <dbReference type="ChEBI" id="CHEBI:15377"/>
        <dbReference type="ChEBI" id="CHEBI:15379"/>
        <dbReference type="ChEBI" id="CHEBI:16240"/>
        <dbReference type="ChEBI" id="CHEBI:16723"/>
        <dbReference type="ChEBI" id="CHEBI:28938"/>
        <dbReference type="ChEBI" id="CHEBI:57844"/>
    </reaction>
</comment>
<comment type="catalytic activity">
    <reaction evidence="5">
        <text>L-arginine + O2 + H2O = 5-guanidino-2-oxopentanoate + H2O2 + NH4(+)</text>
        <dbReference type="Rhea" id="RHEA:51404"/>
        <dbReference type="ChEBI" id="CHEBI:15377"/>
        <dbReference type="ChEBI" id="CHEBI:15379"/>
        <dbReference type="ChEBI" id="CHEBI:16240"/>
        <dbReference type="ChEBI" id="CHEBI:28938"/>
        <dbReference type="ChEBI" id="CHEBI:32682"/>
        <dbReference type="ChEBI" id="CHEBI:58489"/>
    </reaction>
</comment>
<comment type="cofactor">
    <cofactor evidence="5">
        <name>FAD</name>
        <dbReference type="ChEBI" id="CHEBI:57692"/>
    </cofactor>
</comment>
<comment type="subunit">
    <text evidence="3">Homodimer; non-covalently linked.</text>
</comment>
<comment type="subcellular location">
    <subcellularLocation>
        <location evidence="6">Secreted</location>
    </subcellularLocation>
</comment>
<comment type="tissue specificity">
    <text evidence="9">Expressed by the venom gland.</text>
</comment>
<comment type="PTM">
    <text evidence="3">N-glycosylated.</text>
</comment>
<comment type="similarity">
    <text evidence="8">Belongs to the flavin monoamine oxidase family. FIG1 subfamily.</text>
</comment>